<feature type="chain" id="PRO_0000174166" description="Dolichyl pyrophosphate Glc1Man9GlcNAc2 alpha-1,3-glucosyltransferase">
    <location>
        <begin position="1"/>
        <end position="506"/>
    </location>
</feature>
<feature type="transmembrane region" description="Helical" evidence="2">
    <location>
        <begin position="10"/>
        <end position="30"/>
    </location>
</feature>
<feature type="transmembrane region" description="Helical" evidence="2">
    <location>
        <begin position="101"/>
        <end position="121"/>
    </location>
</feature>
<feature type="transmembrane region" description="Helical" evidence="2">
    <location>
        <begin position="133"/>
        <end position="153"/>
    </location>
</feature>
<feature type="transmembrane region" description="Helical" evidence="2">
    <location>
        <begin position="176"/>
        <end position="196"/>
    </location>
</feature>
<feature type="transmembrane region" description="Helical" evidence="2">
    <location>
        <begin position="219"/>
        <end position="239"/>
    </location>
</feature>
<feature type="transmembrane region" description="Helical" evidence="2">
    <location>
        <begin position="261"/>
        <end position="281"/>
    </location>
</feature>
<feature type="transmembrane region" description="Helical" evidence="2">
    <location>
        <begin position="305"/>
        <end position="325"/>
    </location>
</feature>
<feature type="transmembrane region" description="Helical" evidence="2">
    <location>
        <begin position="339"/>
        <end position="359"/>
    </location>
</feature>
<feature type="transmembrane region" description="Helical" evidence="2">
    <location>
        <begin position="384"/>
        <end position="401"/>
    </location>
</feature>
<feature type="transmembrane region" description="Helical" evidence="2">
    <location>
        <begin position="406"/>
        <end position="426"/>
    </location>
</feature>
<feature type="transmembrane region" description="Helical" evidence="2">
    <location>
        <begin position="454"/>
        <end position="474"/>
    </location>
</feature>
<feature type="transmembrane region" description="Helical" evidence="2">
    <location>
        <begin position="479"/>
        <end position="499"/>
    </location>
</feature>
<feature type="sequence conflict" description="In Ref. 3; BX842470." evidence="3" ref="3">
    <original>L</original>
    <variation>P</variation>
    <location>
        <position position="501"/>
    </location>
</feature>
<keyword id="KW-0256">Endoplasmic reticulum</keyword>
<keyword id="KW-0328">Glycosyltransferase</keyword>
<keyword id="KW-0472">Membrane</keyword>
<keyword id="KW-1185">Reference proteome</keyword>
<keyword id="KW-0808">Transferase</keyword>
<keyword id="KW-0812">Transmembrane</keyword>
<keyword id="KW-1133">Transmembrane helix</keyword>
<name>ALG8_ARATH</name>
<comment type="function">
    <text evidence="1">Dolichyl pyrophosphate Glc1Man9GlcNAc2 alpha-1,3-glucosyltransferase that operates in the biosynthetic pathway of dolichol-linked oligosaccharides, the glycan precursors employed in protein asparagine (N)-glycosylation. The assembly of dolichol-linked oligosaccharides begins on the cytosolic side of the endoplasmic reticulum membrane and finishes in its lumen. The sequential addition of sugars to dolichol pyrophosphate produces dolichol-linked oligosaccharides containing fourteen sugars, including two GlcNAcs, nine mannoses and three glucoses. Once assembled, the oligosaccharide is transferred from the lipid to nascent proteins by oligosaccharyltransferases. In the lumen of the endoplasmic reticulum, adds the second glucose residue from dolichyl phosphate glucose (Dol-P-Glc) onto the lipid-linked oligosaccharide intermediate Glc(1)Man(9)GlcNAc(2)-PP-Dol to produce Glc(2)Man(9)GlcNAc(2)-PP-Dol.</text>
</comment>
<comment type="catalytic activity">
    <reaction evidence="1">
        <text>an alpha-D-Glc-(1-&gt;3)-alpha-D-Man-(1-&gt;2)-alpha-D-Man-(1-&gt;2)-alpha-D-Man-(1-&gt;3)-[alpha-D-Man-(1-&gt;2)-alpha-D-Man-(1-&gt;3)-[alpha-D-Man-(1-&gt;2)-alpha-D-Man-(1-&gt;6)]-alpha-D-Man-(1-&gt;6)]-beta-D-Man-(1-&gt;4)-beta-D-GlcNAc-(1-&gt;4)-alpha-D-GlcNAc-diphospho-di-trans,poly-cis-dolichol + a di-trans,poly-cis-dolichyl beta-D-glucosyl phosphate = an alpha-D-Glc-(1-&gt;3)-alpha-D-Glc-(1-&gt;3)-alpha-D-Man-(1-&gt;2)-alpha-D-Man-(1-&gt;2)-alpha-D-Man-(1-&gt;3)-[alpha-D-Man-(1-&gt;2)-alpha-D-Man-(1-&gt;3)-[alpha-D-Man-(1-&gt;2)-alpha-D-Man-(1-&gt;6)]-alpha-D-Man-(1-&gt;6)]-beta-D-Man-(1-&gt;4)-beta-D-GlcNAc-(1-&gt;4)-alpha-D-GlcNAc-diphospho-di-trans,poly-cis-dolichol + a di-trans,poly-cis-dolichyl phosphate + H(+)</text>
        <dbReference type="Rhea" id="RHEA:31307"/>
        <dbReference type="Rhea" id="RHEA-COMP:19498"/>
        <dbReference type="Rhea" id="RHEA-COMP:19502"/>
        <dbReference type="Rhea" id="RHEA-COMP:19521"/>
        <dbReference type="Rhea" id="RHEA-COMP:19522"/>
        <dbReference type="ChEBI" id="CHEBI:15378"/>
        <dbReference type="ChEBI" id="CHEBI:57525"/>
        <dbReference type="ChEBI" id="CHEBI:57683"/>
        <dbReference type="ChEBI" id="CHEBI:132521"/>
        <dbReference type="ChEBI" id="CHEBI:132522"/>
        <dbReference type="EC" id="2.4.1.265"/>
    </reaction>
    <physiologicalReaction direction="left-to-right" evidence="1">
        <dbReference type="Rhea" id="RHEA:31308"/>
    </physiologicalReaction>
</comment>
<comment type="pathway">
    <text evidence="1">Protein modification; protein glycosylation.</text>
</comment>
<comment type="subcellular location">
    <subcellularLocation>
        <location evidence="1">Endoplasmic reticulum membrane</location>
        <topology evidence="2">Multi-pass membrane protein</topology>
    </subcellularLocation>
</comment>
<comment type="similarity">
    <text evidence="3">Belongs to the ALG6/ALG8 glucosyltransferase family.</text>
</comment>
<comment type="sequence caution" evidence="3">
    <conflict type="erroneous gene model prediction">
        <sequence resource="EMBL-CDS" id="AAC27468"/>
    </conflict>
</comment>
<evidence type="ECO:0000250" key="1">
    <source>
        <dbReference type="UniProtKB" id="P40351"/>
    </source>
</evidence>
<evidence type="ECO:0000255" key="2"/>
<evidence type="ECO:0000305" key="3"/>
<protein>
    <recommendedName>
        <fullName evidence="1">Dolichyl pyrophosphate Glc1Man9GlcNAc2 alpha-1,3-glucosyltransferase</fullName>
        <ecNumber evidence="1">2.4.1.265</ecNumber>
    </recommendedName>
    <alternativeName>
        <fullName>Asparagine-linked glycosylation protein 8 homolog</fullName>
    </alternativeName>
    <alternativeName>
        <fullName>Dol-P-Glc:Glc(1)Man(9)GlcNAc(2)-PP-dolichyl alpha-1,3-glucosyltransferase</fullName>
    </alternativeName>
    <alternativeName>
        <fullName>Dolichyl-P-Glc:Glc1Man9GlcNAc2-PP-dolichyl glucosyltransferase</fullName>
    </alternativeName>
</protein>
<accession>O80505</accession>
<proteinExistence type="evidence at transcript level"/>
<gene>
    <name type="ordered locus">At2g44660</name>
    <name type="ORF">F16B22.15</name>
</gene>
<sequence>MDHREKSDRRLLLWFFAVATAVKLLLIPSSRSTDFEVHRNWLAITNSLPLTKWYFDETSQWTLDYPPFFAYFERFLSIFARLVDPRIVDLQSGLDYNAESVIYFQRISVIVSDLCLLYGVYRLTRKLEPLKRNLICALVIWSPGLLIVDHIHFQYNGFLLGWLLLSISFLQEGRDLLGGFLFAVLLCFKHLFAVTAPVYFVYLLRHYCWSGLVTGFRRLVTIGAVVVAVFAAAYGPFIYHGQIQQVISRMFPFGRGLCHAYWAPNFWVFYIILDKGLAVLLRKLGYEIQIPSASFTGGLVGDSSPFAVLPQITPLTTFAMVLLAISPCLIKAWKKPHSGLVARWVAYAYTCGFLFGWHVHEKASLHFTIPLAIVAVQSLEDAKHYFLVSIVSCYSLYPLLYEPQEYPIKVLLLLLHSVVMWLGFAAQYTDYKAQKKETSEIKSKFRIGCFEKSYLMGLIIVEIVSQFLHPYFLGDKLPFLPLMLISTYCTVGIMYSWIWQLRKILT</sequence>
<dbReference type="EC" id="2.4.1.265" evidence="1"/>
<dbReference type="EMBL" id="AC003672">
    <property type="protein sequence ID" value="AAC27468.1"/>
    <property type="status" value="ALT_SEQ"/>
    <property type="molecule type" value="Genomic_DNA"/>
</dbReference>
<dbReference type="EMBL" id="CP002685">
    <property type="protein sequence ID" value="AEC10452.1"/>
    <property type="molecule type" value="Genomic_DNA"/>
</dbReference>
<dbReference type="EMBL" id="BX842470">
    <property type="status" value="NOT_ANNOTATED_CDS"/>
    <property type="molecule type" value="mRNA"/>
</dbReference>
<dbReference type="PIR" id="T01593">
    <property type="entry name" value="T01593"/>
</dbReference>
<dbReference type="RefSeq" id="NP_181994.5">
    <property type="nucleotide sequence ID" value="NM_130030.5"/>
</dbReference>
<dbReference type="SMR" id="O80505"/>
<dbReference type="FunCoup" id="O80505">
    <property type="interactions" value="4202"/>
</dbReference>
<dbReference type="STRING" id="3702.O80505"/>
<dbReference type="CAZy" id="GT57">
    <property type="family name" value="Glycosyltransferase Family 57"/>
</dbReference>
<dbReference type="PaxDb" id="3702-AT2G44660.1"/>
<dbReference type="ProteomicsDB" id="245067"/>
<dbReference type="EnsemblPlants" id="AT2G44660.1">
    <property type="protein sequence ID" value="AT2G44660.1"/>
    <property type="gene ID" value="AT2G44660"/>
</dbReference>
<dbReference type="GeneID" id="819074"/>
<dbReference type="Gramene" id="AT2G44660.1">
    <property type="protein sequence ID" value="AT2G44660.1"/>
    <property type="gene ID" value="AT2G44660"/>
</dbReference>
<dbReference type="KEGG" id="ath:AT2G44660"/>
<dbReference type="Araport" id="AT2G44660"/>
<dbReference type="TAIR" id="AT2G44660"/>
<dbReference type="eggNOG" id="KOG2576">
    <property type="taxonomic scope" value="Eukaryota"/>
</dbReference>
<dbReference type="HOGENOM" id="CLU_022045_1_1_1"/>
<dbReference type="InParanoid" id="O80505"/>
<dbReference type="OMA" id="YHSTDFD"/>
<dbReference type="PhylomeDB" id="O80505"/>
<dbReference type="BioCyc" id="ARA:AT2G44660-MONOMER"/>
<dbReference type="UniPathway" id="UPA00378"/>
<dbReference type="PRO" id="PR:O80505"/>
<dbReference type="Proteomes" id="UP000006548">
    <property type="component" value="Chromosome 2"/>
</dbReference>
<dbReference type="ExpressionAtlas" id="O80505">
    <property type="expression patterns" value="baseline and differential"/>
</dbReference>
<dbReference type="GO" id="GO:0005789">
    <property type="term" value="C:endoplasmic reticulum membrane"/>
    <property type="evidence" value="ECO:0000250"/>
    <property type="project" value="UniProtKB"/>
</dbReference>
<dbReference type="GO" id="GO:0042283">
    <property type="term" value="F:dolichyl pyrophosphate Glc1Man9GlcNAc2 alpha-1,3-glucosyltransferase activity"/>
    <property type="evidence" value="ECO:0000250"/>
    <property type="project" value="UniProtKB"/>
</dbReference>
<dbReference type="GO" id="GO:0006488">
    <property type="term" value="P:dolichol-linked oligosaccharide biosynthetic process"/>
    <property type="evidence" value="ECO:0000250"/>
    <property type="project" value="UniProtKB"/>
</dbReference>
<dbReference type="GO" id="GO:0006487">
    <property type="term" value="P:protein N-linked glycosylation"/>
    <property type="evidence" value="ECO:0000250"/>
    <property type="project" value="UniProtKB"/>
</dbReference>
<dbReference type="InterPro" id="IPR004856">
    <property type="entry name" value="Glyco_trans_ALG6/ALG8"/>
</dbReference>
<dbReference type="PANTHER" id="PTHR12413">
    <property type="entry name" value="DOLICHYL GLYCOSYLTRANSFERASE"/>
    <property type="match status" value="1"/>
</dbReference>
<dbReference type="PANTHER" id="PTHR12413:SF2">
    <property type="entry name" value="DOLICHYL PYROPHOSPHATE GLC1MAN9GLCNAC2 ALPHA-1,3-GLUCOSYLTRANSFERASE-RELATED"/>
    <property type="match status" value="1"/>
</dbReference>
<dbReference type="Pfam" id="PF03155">
    <property type="entry name" value="Alg6_Alg8"/>
    <property type="match status" value="1"/>
</dbReference>
<organism>
    <name type="scientific">Arabidopsis thaliana</name>
    <name type="common">Mouse-ear cress</name>
    <dbReference type="NCBI Taxonomy" id="3702"/>
    <lineage>
        <taxon>Eukaryota</taxon>
        <taxon>Viridiplantae</taxon>
        <taxon>Streptophyta</taxon>
        <taxon>Embryophyta</taxon>
        <taxon>Tracheophyta</taxon>
        <taxon>Spermatophyta</taxon>
        <taxon>Magnoliopsida</taxon>
        <taxon>eudicotyledons</taxon>
        <taxon>Gunneridae</taxon>
        <taxon>Pentapetalae</taxon>
        <taxon>rosids</taxon>
        <taxon>malvids</taxon>
        <taxon>Brassicales</taxon>
        <taxon>Brassicaceae</taxon>
        <taxon>Camelineae</taxon>
        <taxon>Arabidopsis</taxon>
    </lineage>
</organism>
<reference key="1">
    <citation type="journal article" date="1999" name="Nature">
        <title>Sequence and analysis of chromosome 2 of the plant Arabidopsis thaliana.</title>
        <authorList>
            <person name="Lin X."/>
            <person name="Kaul S."/>
            <person name="Rounsley S.D."/>
            <person name="Shea T.P."/>
            <person name="Benito M.-I."/>
            <person name="Town C.D."/>
            <person name="Fujii C.Y."/>
            <person name="Mason T.M."/>
            <person name="Bowman C.L."/>
            <person name="Barnstead M.E."/>
            <person name="Feldblyum T.V."/>
            <person name="Buell C.R."/>
            <person name="Ketchum K.A."/>
            <person name="Lee J.J."/>
            <person name="Ronning C.M."/>
            <person name="Koo H.L."/>
            <person name="Moffat K.S."/>
            <person name="Cronin L.A."/>
            <person name="Shen M."/>
            <person name="Pai G."/>
            <person name="Van Aken S."/>
            <person name="Umayam L."/>
            <person name="Tallon L.J."/>
            <person name="Gill J.E."/>
            <person name="Adams M.D."/>
            <person name="Carrera A.J."/>
            <person name="Creasy T.H."/>
            <person name="Goodman H.M."/>
            <person name="Somerville C.R."/>
            <person name="Copenhaver G.P."/>
            <person name="Preuss D."/>
            <person name="Nierman W.C."/>
            <person name="White O."/>
            <person name="Eisen J.A."/>
            <person name="Salzberg S.L."/>
            <person name="Fraser C.M."/>
            <person name="Venter J.C."/>
        </authorList>
    </citation>
    <scope>NUCLEOTIDE SEQUENCE [LARGE SCALE GENOMIC DNA]</scope>
    <source>
        <strain>cv. Columbia</strain>
    </source>
</reference>
<reference key="2">
    <citation type="journal article" date="2017" name="Plant J.">
        <title>Araport11: a complete reannotation of the Arabidopsis thaliana reference genome.</title>
        <authorList>
            <person name="Cheng C.Y."/>
            <person name="Krishnakumar V."/>
            <person name="Chan A.P."/>
            <person name="Thibaud-Nissen F."/>
            <person name="Schobel S."/>
            <person name="Town C.D."/>
        </authorList>
    </citation>
    <scope>GENOME REANNOTATION</scope>
    <source>
        <strain>cv. Columbia</strain>
    </source>
</reference>
<reference key="3">
    <citation type="journal article" date="2004" name="Genome Res.">
        <title>Whole genome sequence comparisons and 'full-length' cDNA sequences: a combined approach to evaluate and improve Arabidopsis genome annotation.</title>
        <authorList>
            <person name="Castelli V."/>
            <person name="Aury J.-M."/>
            <person name="Jaillon O."/>
            <person name="Wincker P."/>
            <person name="Clepet C."/>
            <person name="Menard M."/>
            <person name="Cruaud C."/>
            <person name="Quetier F."/>
            <person name="Scarpelli C."/>
            <person name="Schaechter V."/>
            <person name="Temple G."/>
            <person name="Caboche M."/>
            <person name="Weissenbach J."/>
            <person name="Salanoubat M."/>
        </authorList>
    </citation>
    <scope>NUCLEOTIDE SEQUENCE [LARGE SCALE MRNA] OF 415-506</scope>
    <source>
        <strain>cv. Columbia</strain>
    </source>
</reference>